<organism>
    <name type="scientific">Drosophila melanogaster</name>
    <name type="common">Fruit fly</name>
    <dbReference type="NCBI Taxonomy" id="7227"/>
    <lineage>
        <taxon>Eukaryota</taxon>
        <taxon>Metazoa</taxon>
        <taxon>Ecdysozoa</taxon>
        <taxon>Arthropoda</taxon>
        <taxon>Hexapoda</taxon>
        <taxon>Insecta</taxon>
        <taxon>Pterygota</taxon>
        <taxon>Neoptera</taxon>
        <taxon>Endopterygota</taxon>
        <taxon>Diptera</taxon>
        <taxon>Brachycera</taxon>
        <taxon>Muscomorpha</taxon>
        <taxon>Ephydroidea</taxon>
        <taxon>Drosophilidae</taxon>
        <taxon>Drosophila</taxon>
        <taxon>Sophophora</taxon>
    </lineage>
</organism>
<evidence type="ECO:0000256" key="1">
    <source>
        <dbReference type="SAM" id="MobiDB-lite"/>
    </source>
</evidence>
<evidence type="ECO:0000269" key="2">
    <source>
    </source>
</evidence>
<evidence type="ECO:0000269" key="3">
    <source>
    </source>
</evidence>
<evidence type="ECO:0000269" key="4">
    <source>
    </source>
</evidence>
<evidence type="ECO:0000269" key="5">
    <source>
    </source>
</evidence>
<evidence type="ECO:0000269" key="6">
    <source>
    </source>
</evidence>
<evidence type="ECO:0000269" key="7">
    <source>
    </source>
</evidence>
<evidence type="ECO:0000269" key="8">
    <source>
    </source>
</evidence>
<evidence type="ECO:0000269" key="9">
    <source>
    </source>
</evidence>
<evidence type="ECO:0000269" key="10">
    <source>
    </source>
</evidence>
<evidence type="ECO:0000269" key="11">
    <source>
    </source>
</evidence>
<evidence type="ECO:0000269" key="12">
    <source>
    </source>
</evidence>
<evidence type="ECO:0000269" key="13">
    <source>
    </source>
</evidence>
<evidence type="ECO:0000305" key="14"/>
<accession>Q24338</accession>
<sequence length="425" mass="47988">MSSDKVKNGNEPEESEESCGDESASYTTNSTTSRSKSPSSSTRSKRRGRRSTKSKPKSRAAYKYDTHVKENHGANIFGVAFNTLLGKDEPQVFATAGSNRVTVYECPRQGGMQLLHCYADPDPDEVFYTCAWSYDLKTSSPLLAAAGYRGVIRVIDVEQNEAVGNYIGHGQAINELKFHPHKLQLLLSGSKDHAIRLWNIQSHVCIAILGGVEGHRDEVLSIDFNMRGDRIVSSGMDHSLKLWCLNTPEFHHKIELSNTFSQEKSTLPFPTVTKHFPDFSTRDIHRNYVDCVQWFGNFVLSKSCENAIVCWKPGQLHQSFEQVKPSDSSCTIIAEFEYDECEIWFVRFGFNPWQKVIALGNQQGKVYVWELDPSDPEGAHMTTLHNSRSVATVRQIAFSRDASVLVYVCDDATVWRWNRRQTTSI</sequence>
<gene>
    <name type="primary">esc</name>
    <name type="ORF">CG14941</name>
</gene>
<proteinExistence type="evidence at protein level"/>
<name>ESC_DROME</name>
<keyword id="KW-0156">Chromatin regulator</keyword>
<keyword id="KW-0217">Developmental protein</keyword>
<keyword id="KW-0539">Nucleus</keyword>
<keyword id="KW-0597">Phosphoprotein</keyword>
<keyword id="KW-1185">Reference proteome</keyword>
<keyword id="KW-0677">Repeat</keyword>
<keyword id="KW-0678">Repressor</keyword>
<keyword id="KW-0804">Transcription</keyword>
<keyword id="KW-0805">Transcription regulation</keyword>
<keyword id="KW-0853">WD repeat</keyword>
<protein>
    <recommendedName>
        <fullName>Polycomb protein esc</fullName>
    </recommendedName>
    <alternativeName>
        <fullName>Protein extra sex combs</fullName>
    </alternativeName>
</protein>
<reference key="1">
    <citation type="journal article" date="1995" name="EMBO J.">
        <title>The Polycomb-group gene, extra sex combs, encodes a nuclear member of the WD-40 repeat family.</title>
        <authorList>
            <person name="Gutjahr T."/>
            <person name="Frei E."/>
            <person name="Spicer C."/>
            <person name="Baumgartner S."/>
            <person name="White R.A.H."/>
            <person name="Noll M."/>
        </authorList>
    </citation>
    <scope>NUCLEOTIDE SEQUENCE [GENOMIC DNA]</scope>
    <scope>FUNCTION</scope>
    <scope>SUBCELLULAR LOCATION</scope>
    <scope>DEVELOPMENTAL STAGE</scope>
    <scope>MUTAGENESIS OF TYR-64 AND LEU-240</scope>
    <source>
        <tissue>Embryo</tissue>
    </source>
</reference>
<reference key="2">
    <citation type="journal article" date="2000" name="Science">
        <title>The genome sequence of Drosophila melanogaster.</title>
        <authorList>
            <person name="Adams M.D."/>
            <person name="Celniker S.E."/>
            <person name="Holt R.A."/>
            <person name="Evans C.A."/>
            <person name="Gocayne J.D."/>
            <person name="Amanatides P.G."/>
            <person name="Scherer S.E."/>
            <person name="Li P.W."/>
            <person name="Hoskins R.A."/>
            <person name="Galle R.F."/>
            <person name="George R.A."/>
            <person name="Lewis S.E."/>
            <person name="Richards S."/>
            <person name="Ashburner M."/>
            <person name="Henderson S.N."/>
            <person name="Sutton G.G."/>
            <person name="Wortman J.R."/>
            <person name="Yandell M.D."/>
            <person name="Zhang Q."/>
            <person name="Chen L.X."/>
            <person name="Brandon R.C."/>
            <person name="Rogers Y.-H.C."/>
            <person name="Blazej R.G."/>
            <person name="Champe M."/>
            <person name="Pfeiffer B.D."/>
            <person name="Wan K.H."/>
            <person name="Doyle C."/>
            <person name="Baxter E.G."/>
            <person name="Helt G."/>
            <person name="Nelson C.R."/>
            <person name="Miklos G.L.G."/>
            <person name="Abril J.F."/>
            <person name="Agbayani A."/>
            <person name="An H.-J."/>
            <person name="Andrews-Pfannkoch C."/>
            <person name="Baldwin D."/>
            <person name="Ballew R.M."/>
            <person name="Basu A."/>
            <person name="Baxendale J."/>
            <person name="Bayraktaroglu L."/>
            <person name="Beasley E.M."/>
            <person name="Beeson K.Y."/>
            <person name="Benos P.V."/>
            <person name="Berman B.P."/>
            <person name="Bhandari D."/>
            <person name="Bolshakov S."/>
            <person name="Borkova D."/>
            <person name="Botchan M.R."/>
            <person name="Bouck J."/>
            <person name="Brokstein P."/>
            <person name="Brottier P."/>
            <person name="Burtis K.C."/>
            <person name="Busam D.A."/>
            <person name="Butler H."/>
            <person name="Cadieu E."/>
            <person name="Center A."/>
            <person name="Chandra I."/>
            <person name="Cherry J.M."/>
            <person name="Cawley S."/>
            <person name="Dahlke C."/>
            <person name="Davenport L.B."/>
            <person name="Davies P."/>
            <person name="de Pablos B."/>
            <person name="Delcher A."/>
            <person name="Deng Z."/>
            <person name="Mays A.D."/>
            <person name="Dew I."/>
            <person name="Dietz S.M."/>
            <person name="Dodson K."/>
            <person name="Doup L.E."/>
            <person name="Downes M."/>
            <person name="Dugan-Rocha S."/>
            <person name="Dunkov B.C."/>
            <person name="Dunn P."/>
            <person name="Durbin K.J."/>
            <person name="Evangelista C.C."/>
            <person name="Ferraz C."/>
            <person name="Ferriera S."/>
            <person name="Fleischmann W."/>
            <person name="Fosler C."/>
            <person name="Gabrielian A.E."/>
            <person name="Garg N.S."/>
            <person name="Gelbart W.M."/>
            <person name="Glasser K."/>
            <person name="Glodek A."/>
            <person name="Gong F."/>
            <person name="Gorrell J.H."/>
            <person name="Gu Z."/>
            <person name="Guan P."/>
            <person name="Harris M."/>
            <person name="Harris N.L."/>
            <person name="Harvey D.A."/>
            <person name="Heiman T.J."/>
            <person name="Hernandez J.R."/>
            <person name="Houck J."/>
            <person name="Hostin D."/>
            <person name="Houston K.A."/>
            <person name="Howland T.J."/>
            <person name="Wei M.-H."/>
            <person name="Ibegwam C."/>
            <person name="Jalali M."/>
            <person name="Kalush F."/>
            <person name="Karpen G.H."/>
            <person name="Ke Z."/>
            <person name="Kennison J.A."/>
            <person name="Ketchum K.A."/>
            <person name="Kimmel B.E."/>
            <person name="Kodira C.D."/>
            <person name="Kraft C.L."/>
            <person name="Kravitz S."/>
            <person name="Kulp D."/>
            <person name="Lai Z."/>
            <person name="Lasko P."/>
            <person name="Lei Y."/>
            <person name="Levitsky A.A."/>
            <person name="Li J.H."/>
            <person name="Li Z."/>
            <person name="Liang Y."/>
            <person name="Lin X."/>
            <person name="Liu X."/>
            <person name="Mattei B."/>
            <person name="McIntosh T.C."/>
            <person name="McLeod M.P."/>
            <person name="McPherson D."/>
            <person name="Merkulov G."/>
            <person name="Milshina N.V."/>
            <person name="Mobarry C."/>
            <person name="Morris J."/>
            <person name="Moshrefi A."/>
            <person name="Mount S.M."/>
            <person name="Moy M."/>
            <person name="Murphy B."/>
            <person name="Murphy L."/>
            <person name="Muzny D.M."/>
            <person name="Nelson D.L."/>
            <person name="Nelson D.R."/>
            <person name="Nelson K.A."/>
            <person name="Nixon K."/>
            <person name="Nusskern D.R."/>
            <person name="Pacleb J.M."/>
            <person name="Palazzolo M."/>
            <person name="Pittman G.S."/>
            <person name="Pan S."/>
            <person name="Pollard J."/>
            <person name="Puri V."/>
            <person name="Reese M.G."/>
            <person name="Reinert K."/>
            <person name="Remington K."/>
            <person name="Saunders R.D.C."/>
            <person name="Scheeler F."/>
            <person name="Shen H."/>
            <person name="Shue B.C."/>
            <person name="Siden-Kiamos I."/>
            <person name="Simpson M."/>
            <person name="Skupski M.P."/>
            <person name="Smith T.J."/>
            <person name="Spier E."/>
            <person name="Spradling A.C."/>
            <person name="Stapleton M."/>
            <person name="Strong R."/>
            <person name="Sun E."/>
            <person name="Svirskas R."/>
            <person name="Tector C."/>
            <person name="Turner R."/>
            <person name="Venter E."/>
            <person name="Wang A.H."/>
            <person name="Wang X."/>
            <person name="Wang Z.-Y."/>
            <person name="Wassarman D.A."/>
            <person name="Weinstock G.M."/>
            <person name="Weissenbach J."/>
            <person name="Williams S.M."/>
            <person name="Woodage T."/>
            <person name="Worley K.C."/>
            <person name="Wu D."/>
            <person name="Yang S."/>
            <person name="Yao Q.A."/>
            <person name="Ye J."/>
            <person name="Yeh R.-F."/>
            <person name="Zaveri J.S."/>
            <person name="Zhan M."/>
            <person name="Zhang G."/>
            <person name="Zhao Q."/>
            <person name="Zheng L."/>
            <person name="Zheng X.H."/>
            <person name="Zhong F.N."/>
            <person name="Zhong W."/>
            <person name="Zhou X."/>
            <person name="Zhu S.C."/>
            <person name="Zhu X."/>
            <person name="Smith H.O."/>
            <person name="Gibbs R.A."/>
            <person name="Myers E.W."/>
            <person name="Rubin G.M."/>
            <person name="Venter J.C."/>
        </authorList>
    </citation>
    <scope>NUCLEOTIDE SEQUENCE [LARGE SCALE GENOMIC DNA]</scope>
    <source>
        <strain>Berkeley</strain>
    </source>
</reference>
<reference key="3">
    <citation type="journal article" date="2002" name="Genome Biol.">
        <title>Annotation of the Drosophila melanogaster euchromatic genome: a systematic review.</title>
        <authorList>
            <person name="Misra S."/>
            <person name="Crosby M.A."/>
            <person name="Mungall C.J."/>
            <person name="Matthews B.B."/>
            <person name="Campbell K.S."/>
            <person name="Hradecky P."/>
            <person name="Huang Y."/>
            <person name="Kaminker J.S."/>
            <person name="Millburn G.H."/>
            <person name="Prochnik S.E."/>
            <person name="Smith C.D."/>
            <person name="Tupy J.L."/>
            <person name="Whitfield E.J."/>
            <person name="Bayraktaroglu L."/>
            <person name="Berman B.P."/>
            <person name="Bettencourt B.R."/>
            <person name="Celniker S.E."/>
            <person name="de Grey A.D.N.J."/>
            <person name="Drysdale R.A."/>
            <person name="Harris N.L."/>
            <person name="Richter J."/>
            <person name="Russo S."/>
            <person name="Schroeder A.J."/>
            <person name="Shu S.Q."/>
            <person name="Stapleton M."/>
            <person name="Yamada C."/>
            <person name="Ashburner M."/>
            <person name="Gelbart W.M."/>
            <person name="Rubin G.M."/>
            <person name="Lewis S.E."/>
        </authorList>
    </citation>
    <scope>GENOME REANNOTATION</scope>
    <source>
        <strain>Berkeley</strain>
    </source>
</reference>
<reference key="4">
    <citation type="journal article" date="2002" name="Genome Biol.">
        <title>A Drosophila full-length cDNA resource.</title>
        <authorList>
            <person name="Stapleton M."/>
            <person name="Carlson J.W."/>
            <person name="Brokstein P."/>
            <person name="Yu C."/>
            <person name="Champe M."/>
            <person name="George R.A."/>
            <person name="Guarin H."/>
            <person name="Kronmiller B."/>
            <person name="Pacleb J.M."/>
            <person name="Park S."/>
            <person name="Wan K.H."/>
            <person name="Rubin G.M."/>
            <person name="Celniker S.E."/>
        </authorList>
    </citation>
    <scope>NUCLEOTIDE SEQUENCE [LARGE SCALE MRNA]</scope>
    <source>
        <strain>Berkeley</strain>
        <tissue>Embryo</tissue>
    </source>
</reference>
<reference key="5">
    <citation type="journal article" date="1998" name="Mol. Cell. Biol.">
        <title>The Drosophila esc and E(z) proteins are direct partners in polycomb group-mediated repression.</title>
        <authorList>
            <person name="Jones C.A."/>
            <person name="Ng J."/>
            <person name="Peterson A.J."/>
            <person name="Morgan K."/>
            <person name="Simon J.A."/>
            <person name="Jones R.S."/>
        </authorList>
    </citation>
    <scope>INTERACTION WITH E(Z)</scope>
</reference>
<reference key="6">
    <citation type="journal article" date="2000" name="Mol. Cell. Biol.">
        <title>A Drosophila ESC-E(Z) protein complex is distinct from other polycomb group complexes and contains covalently modified ESC.</title>
        <authorList>
            <person name="Ng J."/>
            <person name="Hart C.M."/>
            <person name="Morgan K."/>
            <person name="Simon J.A."/>
        </authorList>
    </citation>
    <scope>PHOSPHORYLATION</scope>
    <scope>MUTAGENESIS OF 210-GLY-GLY-211 AND 216-ARG--GLU-218</scope>
</reference>
<reference key="7">
    <citation type="journal article" date="2001" name="Development">
        <title>The Drosophila polycomb group proteins ESC and E(Z) are present in a complex containing the histone-binding protein p55 and the histone deacetylase RPD3.</title>
        <authorList>
            <person name="Tie F."/>
            <person name="Furuyama T."/>
            <person name="Prasad-Sinha J."/>
            <person name="Jane E."/>
            <person name="Harte P.J."/>
        </authorList>
    </citation>
    <scope>IDENTIFICATION IN A COMPLEX WITH HDAC1; E(Z) AND CAF1-55</scope>
</reference>
<reference key="8">
    <citation type="journal article" date="2001" name="Genes Dev.">
        <title>Establishment of Polycomb silencing requires a transient interaction between PC and ESC.</title>
        <authorList>
            <person name="Poux S."/>
            <person name="Melfi R."/>
            <person name="Pirrotta V."/>
        </authorList>
    </citation>
    <scope>IDENTIFICATION IN A COMPLEX WITH HDAC1; PHO AND E(Z)</scope>
    <scope>TRANSIENT INTERACTION WITH THE PRC1 COMPLEX</scope>
</reference>
<reference key="9">
    <citation type="journal article" date="2002" name="Cell">
        <title>Drosophila Enhancer of zeste/ESC complexes have a histone H3 methyltransferase activity that marks chromosomal Polycomb sites.</title>
        <authorList>
            <person name="Czermin B."/>
            <person name="Melfi R."/>
            <person name="McCabe D."/>
            <person name="Seitz V."/>
            <person name="Imhof A."/>
            <person name="Pirrotta V."/>
        </authorList>
    </citation>
    <scope>IDENTIFICATION IN AN ESC/E(Z) COMPLEX WITH CAF1-55; E(Z); HDAC1 AND SU(Z)12</scope>
    <scope>METHYLTRANSFERASE ACTIVITY OF THE COMPLEX</scope>
</reference>
<reference key="10">
    <citation type="journal article" date="2002" name="Cell">
        <title>Histone methyltransferase activity of a Drosophila Polycomb group repressor complex.</title>
        <authorList>
            <person name="Mueller J."/>
            <person name="Hart C.M."/>
            <person name="Francis N.J."/>
            <person name="Vargas M.L."/>
            <person name="Sengupta A."/>
            <person name="Wild B."/>
            <person name="Miller E.L."/>
            <person name="O'Connor M.B."/>
            <person name="Kingston R.E."/>
            <person name="Simon J.A."/>
        </authorList>
    </citation>
    <scope>IDENTIFICATION IN AN ESC/E(Z) COMPLEX WITH E(Z); CAF1-55 AND SU(Z)12</scope>
    <scope>METHYLTRANSFERASE ACTIVITY OF THE COMPLEX</scope>
</reference>
<reference key="11">
    <citation type="journal article" date="2003" name="Genesis">
        <title>Polycomb group proteins ESC and E(Z) are present in multiple distinct complexes that undergo dynamic changes during development.</title>
        <authorList>
            <person name="Furuyama T."/>
            <person name="Tie F."/>
            <person name="Harte P.J."/>
        </authorList>
    </citation>
    <scope>IDENTIFICATION IN AN ESC/E(Z) COMPLEX WITH CAF1-55; E(Z) AND HDAC1</scope>
    <scope>SUBCELLULAR LOCATION</scope>
    <scope>DEVELOPMENTAL STAGE</scope>
</reference>
<reference key="12">
    <citation type="journal article" date="2003" name="Mol. Cell. Biol.">
        <title>A 1-megadalton ESC/E(Z) complex from Drosophila that contains polycomblike and RPD3.</title>
        <authorList>
            <person name="Tie F."/>
            <person name="Prasad-Sinha J."/>
            <person name="Birve A."/>
            <person name="Rasmuson-Lestander A."/>
            <person name="Harte P.J."/>
        </authorList>
    </citation>
    <scope>IDENTIFICATION IN AN ESC/E(Z) COMPLEX WITH CAF1-55; E(Z); PCL; HDAC1 AND SU(Z)12</scope>
</reference>
<reference key="13">
    <citation type="journal article" date="2003" name="Nucleic Acids Res.">
        <title>The Drosophila Corto protein interacts with Polycomb-group proteins and the GAGA factor.</title>
        <authorList>
            <person name="Salvaing J."/>
            <person name="Lopez A."/>
            <person name="Boivin A."/>
            <person name="Deutsch J.S."/>
            <person name="Peronnet F."/>
        </authorList>
    </citation>
    <scope>INTERACTION WITH CORTO</scope>
</reference>
<reference key="14">
    <citation type="journal article" date="2008" name="J. Proteome Res.">
        <title>Phosphoproteome analysis of Drosophila melanogaster embryos.</title>
        <authorList>
            <person name="Zhai B."/>
            <person name="Villen J."/>
            <person name="Beausoleil S.A."/>
            <person name="Mintseris J."/>
            <person name="Gygi S.P."/>
        </authorList>
    </citation>
    <scope>PHOSPHORYLATION [LARGE SCALE ANALYSIS] AT SER-15</scope>
    <scope>IDENTIFICATION BY MASS SPECTROMETRY</scope>
    <source>
        <tissue>Embryo</tissue>
    </source>
</reference>
<reference key="15">
    <citation type="journal article" date="2012" name="Mol. Cell. Biol.">
        <title>Polycomb repressive complex 2-dependent and -independent functions of Jarid2 in transcriptional regulation in Drosophila.</title>
        <authorList>
            <person name="Herz H.M."/>
            <person name="Mohan M."/>
            <person name="Garrett A.S."/>
            <person name="Miller C."/>
            <person name="Casto D."/>
            <person name="Zhang Y."/>
            <person name="Seidel C."/>
            <person name="Haug J.S."/>
            <person name="Florens L."/>
            <person name="Washburn M.P."/>
            <person name="Yamaguchi M."/>
            <person name="Shiekhattar R."/>
            <person name="Shilatifard A."/>
        </authorList>
    </citation>
    <scope>IDENTIFICATION IN THE PRC2.2 COMPLEX</scope>
    <scope>IDENTIFICATION BY MASS SPECTROMETRY</scope>
</reference>
<dbReference type="EMBL" id="L41867">
    <property type="protein sequence ID" value="AAA86427.1"/>
    <property type="molecule type" value="Genomic_DNA"/>
</dbReference>
<dbReference type="EMBL" id="AE014134">
    <property type="protein sequence ID" value="AAF53124.1"/>
    <property type="molecule type" value="Genomic_DNA"/>
</dbReference>
<dbReference type="EMBL" id="AY069796">
    <property type="protein sequence ID" value="AAL39941.1"/>
    <property type="molecule type" value="mRNA"/>
</dbReference>
<dbReference type="PIR" id="S58672">
    <property type="entry name" value="S58672"/>
</dbReference>
<dbReference type="RefSeq" id="NP_477431.1">
    <property type="nucleotide sequence ID" value="NM_058083.4"/>
</dbReference>
<dbReference type="SMR" id="Q24338"/>
<dbReference type="BioGRID" id="60648">
    <property type="interactions" value="40"/>
</dbReference>
<dbReference type="ComplexPortal" id="CPX-2591">
    <property type="entry name" value="Polycomb repressive complex 2, Pcl variant"/>
</dbReference>
<dbReference type="ComplexPortal" id="CPX-2603">
    <property type="entry name" value="Polycomb repressive complex 2, Jarid2-jing variant"/>
</dbReference>
<dbReference type="DIP" id="DIP-20069N"/>
<dbReference type="FunCoup" id="Q24338">
    <property type="interactions" value="1241"/>
</dbReference>
<dbReference type="IntAct" id="Q24338">
    <property type="interactions" value="17"/>
</dbReference>
<dbReference type="MINT" id="Q24338"/>
<dbReference type="STRING" id="7227.FBpp0079907"/>
<dbReference type="iPTMnet" id="Q24338"/>
<dbReference type="PaxDb" id="7227-FBpp0079907"/>
<dbReference type="DNASU" id="34595"/>
<dbReference type="EnsemblMetazoa" id="FBtr0080325">
    <property type="protein sequence ID" value="FBpp0079907"/>
    <property type="gene ID" value="FBgn0000588"/>
</dbReference>
<dbReference type="GeneID" id="34595"/>
<dbReference type="KEGG" id="dme:Dmel_CG14941"/>
<dbReference type="AGR" id="FB:FBgn0000588"/>
<dbReference type="CTD" id="34595"/>
<dbReference type="FlyBase" id="FBgn0000588">
    <property type="gene designation" value="esc"/>
</dbReference>
<dbReference type="VEuPathDB" id="VectorBase:FBgn0000588"/>
<dbReference type="eggNOG" id="KOG1034">
    <property type="taxonomic scope" value="Eukaryota"/>
</dbReference>
<dbReference type="GeneTree" id="ENSGT00510000047334"/>
<dbReference type="HOGENOM" id="CLU_032683_1_0_1"/>
<dbReference type="InParanoid" id="Q24338"/>
<dbReference type="OMA" id="VWEMDPS"/>
<dbReference type="OrthoDB" id="7318948at2759"/>
<dbReference type="PhylomeDB" id="Q24338"/>
<dbReference type="BioGRID-ORCS" id="34595">
    <property type="hits" value="0 hits in 1 CRISPR screen"/>
</dbReference>
<dbReference type="CD-CODE" id="58FDC23F">
    <property type="entry name" value="PcG body"/>
</dbReference>
<dbReference type="GenomeRNAi" id="34595"/>
<dbReference type="PRO" id="PR:Q24338"/>
<dbReference type="Proteomes" id="UP000000803">
    <property type="component" value="Chromosome 2L"/>
</dbReference>
<dbReference type="Bgee" id="FBgn0000588">
    <property type="expression patterns" value="Expressed in egg cell and 33 other cell types or tissues"/>
</dbReference>
<dbReference type="ExpressionAtlas" id="Q24338">
    <property type="expression patterns" value="baseline and differential"/>
</dbReference>
<dbReference type="GO" id="GO:0000785">
    <property type="term" value="C:chromatin"/>
    <property type="evidence" value="ECO:0000250"/>
    <property type="project" value="UniProtKB"/>
</dbReference>
<dbReference type="GO" id="GO:0035098">
    <property type="term" value="C:ESC/E(Z) complex"/>
    <property type="evidence" value="ECO:0000314"/>
    <property type="project" value="FlyBase"/>
</dbReference>
<dbReference type="GO" id="GO:0035097">
    <property type="term" value="C:histone methyltransferase complex"/>
    <property type="evidence" value="ECO:0000314"/>
    <property type="project" value="FlyBase"/>
</dbReference>
<dbReference type="GO" id="GO:0005634">
    <property type="term" value="C:nucleus"/>
    <property type="evidence" value="ECO:0000314"/>
    <property type="project" value="UniProtKB"/>
</dbReference>
<dbReference type="GO" id="GO:0005700">
    <property type="term" value="C:polytene chromosome"/>
    <property type="evidence" value="ECO:0000314"/>
    <property type="project" value="FlyBase"/>
</dbReference>
<dbReference type="GO" id="GO:0008047">
    <property type="term" value="F:enzyme activator activity"/>
    <property type="evidence" value="ECO:0000314"/>
    <property type="project" value="FlyBase"/>
</dbReference>
<dbReference type="GO" id="GO:0042802">
    <property type="term" value="F:identical protein binding"/>
    <property type="evidence" value="ECO:0000353"/>
    <property type="project" value="IntAct"/>
</dbReference>
<dbReference type="GO" id="GO:0009948">
    <property type="term" value="P:anterior/posterior axis specification"/>
    <property type="evidence" value="ECO:0000315"/>
    <property type="project" value="UniProtKB"/>
</dbReference>
<dbReference type="GO" id="GO:0140718">
    <property type="term" value="P:facultative heterochromatin formation"/>
    <property type="evidence" value="ECO:0000315"/>
    <property type="project" value="FlyBase"/>
</dbReference>
<dbReference type="GO" id="GO:0031507">
    <property type="term" value="P:heterochromatin formation"/>
    <property type="evidence" value="ECO:0000315"/>
    <property type="project" value="FlyBase"/>
</dbReference>
<dbReference type="GO" id="GO:0000122">
    <property type="term" value="P:negative regulation of transcription by RNA polymerase II"/>
    <property type="evidence" value="ECO:0000318"/>
    <property type="project" value="GO_Central"/>
</dbReference>
<dbReference type="GO" id="GO:0006357">
    <property type="term" value="P:regulation of transcription by RNA polymerase II"/>
    <property type="evidence" value="ECO:0000315"/>
    <property type="project" value="UniProtKB"/>
</dbReference>
<dbReference type="GO" id="GO:0045815">
    <property type="term" value="P:transcription initiation-coupled chromatin remodeling"/>
    <property type="evidence" value="ECO:0000303"/>
    <property type="project" value="UniProtKB"/>
</dbReference>
<dbReference type="FunFam" id="2.130.10.10:FF:000056">
    <property type="entry name" value="Polycomb protein eed"/>
    <property type="match status" value="1"/>
</dbReference>
<dbReference type="Gene3D" id="2.130.10.10">
    <property type="entry name" value="YVTN repeat-like/Quinoprotein amine dehydrogenase"/>
    <property type="match status" value="1"/>
</dbReference>
<dbReference type="InterPro" id="IPR051243">
    <property type="entry name" value="PcG_WD-repeat"/>
</dbReference>
<dbReference type="InterPro" id="IPR015943">
    <property type="entry name" value="WD40/YVTN_repeat-like_dom_sf"/>
</dbReference>
<dbReference type="InterPro" id="IPR019775">
    <property type="entry name" value="WD40_repeat_CS"/>
</dbReference>
<dbReference type="InterPro" id="IPR036322">
    <property type="entry name" value="WD40_repeat_dom_sf"/>
</dbReference>
<dbReference type="InterPro" id="IPR001680">
    <property type="entry name" value="WD40_rpt"/>
</dbReference>
<dbReference type="PANTHER" id="PTHR10253">
    <property type="entry name" value="POLYCOMB PROTEIN"/>
    <property type="match status" value="1"/>
</dbReference>
<dbReference type="Pfam" id="PF00400">
    <property type="entry name" value="WD40"/>
    <property type="match status" value="2"/>
</dbReference>
<dbReference type="SMART" id="SM00320">
    <property type="entry name" value="WD40"/>
    <property type="match status" value="5"/>
</dbReference>
<dbReference type="SUPFAM" id="SSF50978">
    <property type="entry name" value="WD40 repeat-like"/>
    <property type="match status" value="1"/>
</dbReference>
<dbReference type="PROSITE" id="PS00678">
    <property type="entry name" value="WD_REPEATS_1"/>
    <property type="match status" value="1"/>
</dbReference>
<dbReference type="PROSITE" id="PS50082">
    <property type="entry name" value="WD_REPEATS_2"/>
    <property type="match status" value="2"/>
</dbReference>
<dbReference type="PROSITE" id="PS50294">
    <property type="entry name" value="WD_REPEATS_REGION"/>
    <property type="match status" value="1"/>
</dbReference>
<feature type="chain" id="PRO_0000050972" description="Polycomb protein esc">
    <location>
        <begin position="1"/>
        <end position="425"/>
    </location>
</feature>
<feature type="repeat" description="WD 1">
    <location>
        <begin position="71"/>
        <end position="114"/>
    </location>
</feature>
<feature type="repeat" description="WD 2">
    <location>
        <begin position="126"/>
        <end position="165"/>
    </location>
</feature>
<feature type="repeat" description="WD 3">
    <location>
        <begin position="168"/>
        <end position="208"/>
    </location>
</feature>
<feature type="repeat" description="WD 4">
    <location>
        <begin position="214"/>
        <end position="253"/>
    </location>
</feature>
<feature type="repeat" description="WD 5">
    <location>
        <begin position="284"/>
        <end position="321"/>
    </location>
</feature>
<feature type="repeat" description="WD 6">
    <location>
        <begin position="340"/>
        <end position="379"/>
    </location>
</feature>
<feature type="repeat" description="WD 7">
    <location>
        <begin position="388"/>
        <end position="424"/>
    </location>
</feature>
<feature type="region of interest" description="Disordered" evidence="1">
    <location>
        <begin position="1"/>
        <end position="64"/>
    </location>
</feature>
<feature type="compositionally biased region" description="Basic and acidic residues" evidence="1">
    <location>
        <begin position="1"/>
        <end position="10"/>
    </location>
</feature>
<feature type="compositionally biased region" description="Acidic residues" evidence="1">
    <location>
        <begin position="11"/>
        <end position="20"/>
    </location>
</feature>
<feature type="compositionally biased region" description="Low complexity" evidence="1">
    <location>
        <begin position="21"/>
        <end position="42"/>
    </location>
</feature>
<feature type="compositionally biased region" description="Basic residues" evidence="1">
    <location>
        <begin position="43"/>
        <end position="60"/>
    </location>
</feature>
<feature type="modified residue" description="Phosphoserine" evidence="10">
    <location>
        <position position="15"/>
    </location>
</feature>
<feature type="mutagenesis site" description="In esc1; induces homeotic transformation; when associated with R-240." evidence="12">
    <original>Y</original>
    <variation>F</variation>
    <location>
        <position position="64"/>
    </location>
</feature>
<feature type="mutagenesis site" description="Strongly reduces phosphorylation and the interaction with E(z)." evidence="2">
    <original>GG</original>
    <variation>AA</variation>
    <location>
        <begin position="210"/>
        <end position="211"/>
    </location>
</feature>
<feature type="mutagenesis site" description="Strongly reduces phosphorylation and the interaction with E(z)." evidence="2">
    <original>RDE</original>
    <variation>AAA</variation>
    <location>
        <begin position="216"/>
        <end position="218"/>
    </location>
</feature>
<feature type="mutagenesis site" description="In esc1; induces homeotic transformation; when associated with F-64." evidence="12">
    <original>L</original>
    <variation>R</variation>
    <location>
        <position position="240"/>
    </location>
</feature>
<comment type="function">
    <text evidence="12">Polycomb group (PcG) protein. While PcG proteins are generally required to maintain the transcriptionally repressive state of homeotic genes throughout development, this protein is specifically required during the first 6 hours of embryogenesis to establish the repressed state. Component of the Esc/E(z) complex, which methylates 'Lys-9' and 'Lys-27' residues of histone H3, leading to transcriptional repression of the affected target gene. The Esc/E(z) complex is necessary but not sufficient for the repression of homeotic target genes, suggesting that the recruitment of the distinct PRC1 complex is also required.</text>
</comment>
<comment type="subunit">
    <text evidence="3 4 5 6 7 8 9 11 13">Component of the polycomb repressive complex 2 (PRC2, also known as the Esc/E(Z) complex), composed of Caf1-55, esc, E(z), Su(z)12, and possibly pho (PubMed:11124122, PubMed:11581156, PubMed:12408863, PubMed:12408864, PubMed:9566901). PRC2 associates with the accessory components Jarid2 and jing to form the PRC2 Jarid2-jing variant (PRC2.2) (PubMed:22354997). PRC2 may also associate with Pcl and HDAC1/Rpd3 during early embryogenesis (PubMed:11124122, PubMed:11581156, PubMed:12408863, PubMed:12408864, PubMed:12533794, PubMed:12697833). This complex is distinct from the PRC1 complex, which contains many other PcG proteins like Pc, Ph, Psc, Su(z)2 (PubMed:12533794). The two complexes however cooperate and interact together during the first 3 hours of development to establish PcG silencing. Interacts with corto in vitro (PubMed:12771214).</text>
</comment>
<comment type="interaction">
    <interactant intactId="EBI-88911">
        <id>Q24338</id>
    </interactant>
    <interactant intactId="EBI-75924">
        <id>Q24572</id>
        <label>Caf1-55</label>
    </interactant>
    <organismsDiffer>false</organismsDiffer>
    <experiments>11</experiments>
</comment>
<comment type="interaction">
    <interactant intactId="EBI-88911">
        <id>Q24338</id>
    </interactant>
    <interactant intactId="EBI-300379">
        <id>P41046</id>
        <label>corto</label>
    </interactant>
    <organismsDiffer>false</organismsDiffer>
    <experiments>3</experiments>
</comment>
<comment type="interaction">
    <interactant intactId="EBI-88911">
        <id>Q24338</id>
    </interactant>
    <interactant intactId="EBI-112315">
        <id>P42124</id>
        <label>E(z)</label>
    </interactant>
    <organismsDiffer>false</organismsDiffer>
    <experiments>21</experiments>
</comment>
<comment type="interaction">
    <interactant intactId="EBI-88911">
        <id>Q24338</id>
    </interactant>
    <interactant intactId="EBI-88911">
        <id>Q24338</id>
        <label>esc</label>
    </interactant>
    <organismsDiffer>false</organismsDiffer>
    <experiments>3</experiments>
</comment>
<comment type="interaction">
    <interactant intactId="EBI-88911">
        <id>Q24338</id>
    </interactant>
    <interactant intactId="EBI-302197">
        <id>Q94517</id>
        <label>HDAC1</label>
    </interactant>
    <organismsDiffer>false</organismsDiffer>
    <experiments>11</experiments>
</comment>
<comment type="subcellular location">
    <subcellularLocation>
        <location evidence="7 12">Nucleus</location>
    </subcellularLocation>
</comment>
<comment type="tissue specificity">
    <text>Widely expressed.</text>
</comment>
<comment type="developmental stage">
    <text evidence="7 12">Expressed both maternally and zygotically. Strongly expressed in the oocyte and in early embryos, then decreases at the end of embryogenesis. Weakly expressed in third instar larvae. Transiently required between 2 and 6 hours of embryogenesis to establish PcG silencing and promote viable adults.</text>
</comment>
<comment type="similarity">
    <text evidence="14">Belongs to the WD repeat ESC family.</text>
</comment>